<comment type="function">
    <text evidence="1">Transfers the 4'-phosphopantetheine moiety from coenzyme A to a Ser of acyl-carrier-protein.</text>
</comment>
<comment type="catalytic activity">
    <reaction evidence="1">
        <text>apo-[ACP] + CoA = holo-[ACP] + adenosine 3',5'-bisphosphate + H(+)</text>
        <dbReference type="Rhea" id="RHEA:12068"/>
        <dbReference type="Rhea" id="RHEA-COMP:9685"/>
        <dbReference type="Rhea" id="RHEA-COMP:9690"/>
        <dbReference type="ChEBI" id="CHEBI:15378"/>
        <dbReference type="ChEBI" id="CHEBI:29999"/>
        <dbReference type="ChEBI" id="CHEBI:57287"/>
        <dbReference type="ChEBI" id="CHEBI:58343"/>
        <dbReference type="ChEBI" id="CHEBI:64479"/>
        <dbReference type="EC" id="2.7.8.7"/>
    </reaction>
</comment>
<comment type="cofactor">
    <cofactor evidence="1">
        <name>Mg(2+)</name>
        <dbReference type="ChEBI" id="CHEBI:18420"/>
    </cofactor>
</comment>
<comment type="subcellular location">
    <subcellularLocation>
        <location evidence="1">Cytoplasm</location>
    </subcellularLocation>
</comment>
<comment type="similarity">
    <text evidence="1">Belongs to the P-Pant transferase superfamily. AcpS family.</text>
</comment>
<evidence type="ECO:0000255" key="1">
    <source>
        <dbReference type="HAMAP-Rule" id="MF_00101"/>
    </source>
</evidence>
<accession>Q0TUE3</accession>
<proteinExistence type="inferred from homology"/>
<protein>
    <recommendedName>
        <fullName evidence="1">Holo-[acyl-carrier-protein] synthase</fullName>
        <shortName evidence="1">Holo-ACP synthase</shortName>
        <ecNumber evidence="1">2.7.8.7</ecNumber>
    </recommendedName>
    <alternativeName>
        <fullName evidence="1">4'-phosphopantetheinyl transferase AcpS</fullName>
    </alternativeName>
</protein>
<feature type="chain" id="PRO_1000008415" description="Holo-[acyl-carrier-protein] synthase">
    <location>
        <begin position="1"/>
        <end position="133"/>
    </location>
</feature>
<feature type="binding site" evidence="1">
    <location>
        <position position="8"/>
    </location>
    <ligand>
        <name>Mg(2+)</name>
        <dbReference type="ChEBI" id="CHEBI:18420"/>
    </ligand>
</feature>
<feature type="binding site" evidence="1">
    <location>
        <position position="56"/>
    </location>
    <ligand>
        <name>Mg(2+)</name>
        <dbReference type="ChEBI" id="CHEBI:18420"/>
    </ligand>
</feature>
<organism>
    <name type="scientific">Clostridium perfringens (strain ATCC 13124 / DSM 756 / JCM 1290 / NCIMB 6125 / NCTC 8237 / Type A)</name>
    <dbReference type="NCBI Taxonomy" id="195103"/>
    <lineage>
        <taxon>Bacteria</taxon>
        <taxon>Bacillati</taxon>
        <taxon>Bacillota</taxon>
        <taxon>Clostridia</taxon>
        <taxon>Eubacteriales</taxon>
        <taxon>Clostridiaceae</taxon>
        <taxon>Clostridium</taxon>
    </lineage>
</organism>
<gene>
    <name evidence="1" type="primary">acpS</name>
    <name type="ordered locus">CPF_0287</name>
</gene>
<dbReference type="EC" id="2.7.8.7" evidence="1"/>
<dbReference type="EMBL" id="CP000246">
    <property type="protein sequence ID" value="ABG83299.1"/>
    <property type="molecule type" value="Genomic_DNA"/>
</dbReference>
<dbReference type="RefSeq" id="WP_004457509.1">
    <property type="nucleotide sequence ID" value="NC_008261.1"/>
</dbReference>
<dbReference type="SMR" id="Q0TUE3"/>
<dbReference type="STRING" id="195103.CPF_0287"/>
<dbReference type="PaxDb" id="195103-CPF_0287"/>
<dbReference type="KEGG" id="cpf:CPF_0287"/>
<dbReference type="eggNOG" id="COG0736">
    <property type="taxonomic scope" value="Bacteria"/>
</dbReference>
<dbReference type="HOGENOM" id="CLU_089696_0_2_9"/>
<dbReference type="Proteomes" id="UP000001823">
    <property type="component" value="Chromosome"/>
</dbReference>
<dbReference type="GO" id="GO:0005737">
    <property type="term" value="C:cytoplasm"/>
    <property type="evidence" value="ECO:0007669"/>
    <property type="project" value="UniProtKB-SubCell"/>
</dbReference>
<dbReference type="GO" id="GO:0008897">
    <property type="term" value="F:holo-[acyl-carrier-protein] synthase activity"/>
    <property type="evidence" value="ECO:0007669"/>
    <property type="project" value="UniProtKB-UniRule"/>
</dbReference>
<dbReference type="GO" id="GO:0000287">
    <property type="term" value="F:magnesium ion binding"/>
    <property type="evidence" value="ECO:0007669"/>
    <property type="project" value="UniProtKB-UniRule"/>
</dbReference>
<dbReference type="GO" id="GO:0006633">
    <property type="term" value="P:fatty acid biosynthetic process"/>
    <property type="evidence" value="ECO:0007669"/>
    <property type="project" value="UniProtKB-UniRule"/>
</dbReference>
<dbReference type="Gene3D" id="3.90.470.20">
    <property type="entry name" value="4'-phosphopantetheinyl transferase domain"/>
    <property type="match status" value="1"/>
</dbReference>
<dbReference type="HAMAP" id="MF_00101">
    <property type="entry name" value="AcpS"/>
    <property type="match status" value="1"/>
</dbReference>
<dbReference type="InterPro" id="IPR008278">
    <property type="entry name" value="4-PPantetheinyl_Trfase_dom"/>
</dbReference>
<dbReference type="InterPro" id="IPR037143">
    <property type="entry name" value="4-PPantetheinyl_Trfase_dom_sf"/>
</dbReference>
<dbReference type="InterPro" id="IPR002582">
    <property type="entry name" value="ACPS"/>
</dbReference>
<dbReference type="InterPro" id="IPR004568">
    <property type="entry name" value="Ppantetheine-prot_Trfase_dom"/>
</dbReference>
<dbReference type="NCBIfam" id="TIGR00516">
    <property type="entry name" value="acpS"/>
    <property type="match status" value="1"/>
</dbReference>
<dbReference type="NCBIfam" id="TIGR00556">
    <property type="entry name" value="pantethn_trn"/>
    <property type="match status" value="1"/>
</dbReference>
<dbReference type="Pfam" id="PF01648">
    <property type="entry name" value="ACPS"/>
    <property type="match status" value="1"/>
</dbReference>
<dbReference type="SUPFAM" id="SSF56214">
    <property type="entry name" value="4'-phosphopantetheinyl transferase"/>
    <property type="match status" value="1"/>
</dbReference>
<name>ACPS_CLOP1</name>
<reference key="1">
    <citation type="journal article" date="2006" name="Genome Res.">
        <title>Skewed genomic variability in strains of the toxigenic bacterial pathogen, Clostridium perfringens.</title>
        <authorList>
            <person name="Myers G.S.A."/>
            <person name="Rasko D.A."/>
            <person name="Cheung J.K."/>
            <person name="Ravel J."/>
            <person name="Seshadri R."/>
            <person name="DeBoy R.T."/>
            <person name="Ren Q."/>
            <person name="Varga J."/>
            <person name="Awad M.M."/>
            <person name="Brinkac L.M."/>
            <person name="Daugherty S.C."/>
            <person name="Haft D.H."/>
            <person name="Dodson R.J."/>
            <person name="Madupu R."/>
            <person name="Nelson W.C."/>
            <person name="Rosovitz M.J."/>
            <person name="Sullivan S.A."/>
            <person name="Khouri H."/>
            <person name="Dimitrov G.I."/>
            <person name="Watkins K.L."/>
            <person name="Mulligan S."/>
            <person name="Benton J."/>
            <person name="Radune D."/>
            <person name="Fisher D.J."/>
            <person name="Atkins H.S."/>
            <person name="Hiscox T."/>
            <person name="Jost B.H."/>
            <person name="Billington S.J."/>
            <person name="Songer J.G."/>
            <person name="McClane B.A."/>
            <person name="Titball R.W."/>
            <person name="Rood J.I."/>
            <person name="Melville S.B."/>
            <person name="Paulsen I.T."/>
        </authorList>
    </citation>
    <scope>NUCLEOTIDE SEQUENCE [LARGE SCALE GENOMIC DNA]</scope>
    <source>
        <strain>ATCC 13124 / DSM 756 / JCM 1290 / NCIMB 6125 / NCTC 8237 / S 107 / Type A</strain>
    </source>
</reference>
<keyword id="KW-0963">Cytoplasm</keyword>
<keyword id="KW-0275">Fatty acid biosynthesis</keyword>
<keyword id="KW-0276">Fatty acid metabolism</keyword>
<keyword id="KW-0444">Lipid biosynthesis</keyword>
<keyword id="KW-0443">Lipid metabolism</keyword>
<keyword id="KW-0460">Magnesium</keyword>
<keyword id="KW-0479">Metal-binding</keyword>
<keyword id="KW-0808">Transferase</keyword>
<sequence length="133" mass="14812">MIIGIGVDIIEIERVRQAIQNNKNFLSKLFTEREIDYFISRNMNSEVIAGNFAAKEAVSKALGTGIRGFSFKDIEILRNELGKPEVILHNGANLIGNKLVENNNSLRVHLSISHNNSSAIAYSVLEGEYYGNM</sequence>